<keyword id="KW-0025">Alternative splicing</keyword>
<keyword id="KW-0407">Ion channel</keyword>
<keyword id="KW-0406">Ion transport</keyword>
<keyword id="KW-0472">Membrane</keyword>
<keyword id="KW-0597">Phosphoprotein</keyword>
<keyword id="KW-1185">Reference proteome</keyword>
<keyword id="KW-0812">Transmembrane</keyword>
<keyword id="KW-1133">Transmembrane helix</keyword>
<keyword id="KW-0813">Transport</keyword>
<name>MSL5_ARATH</name>
<feature type="chain" id="PRO_0000415328" description="Mechanosensitive ion channel protein 5">
    <location>
        <begin position="1"/>
        <end position="881"/>
    </location>
</feature>
<feature type="transmembrane region" description="Helical" evidence="3">
    <location>
        <begin position="265"/>
        <end position="285"/>
    </location>
</feature>
<feature type="transmembrane region" description="Helical" evidence="3">
    <location>
        <begin position="309"/>
        <end position="329"/>
    </location>
</feature>
<feature type="transmembrane region" description="Helical" evidence="3">
    <location>
        <begin position="349"/>
        <end position="369"/>
    </location>
</feature>
<feature type="transmembrane region" description="Helical" evidence="3">
    <location>
        <begin position="387"/>
        <end position="407"/>
    </location>
</feature>
<feature type="transmembrane region" description="Helical" evidence="3">
    <location>
        <begin position="642"/>
        <end position="662"/>
    </location>
</feature>
<feature type="transmembrane region" description="Helical" evidence="3">
    <location>
        <begin position="677"/>
        <end position="697"/>
    </location>
</feature>
<feature type="region of interest" description="Disordered" evidence="4">
    <location>
        <begin position="1"/>
        <end position="248"/>
    </location>
</feature>
<feature type="region of interest" description="Disordered" evidence="4">
    <location>
        <begin position="861"/>
        <end position="881"/>
    </location>
</feature>
<feature type="compositionally biased region" description="Basic and acidic residues" evidence="4">
    <location>
        <begin position="1"/>
        <end position="12"/>
    </location>
</feature>
<feature type="compositionally biased region" description="Basic and acidic residues" evidence="4">
    <location>
        <begin position="48"/>
        <end position="59"/>
    </location>
</feature>
<feature type="compositionally biased region" description="Polar residues" evidence="4">
    <location>
        <begin position="115"/>
        <end position="145"/>
    </location>
</feature>
<feature type="compositionally biased region" description="Basic and acidic residues" evidence="4">
    <location>
        <begin position="169"/>
        <end position="179"/>
    </location>
</feature>
<feature type="compositionally biased region" description="Polar residues" evidence="4">
    <location>
        <begin position="864"/>
        <end position="881"/>
    </location>
</feature>
<feature type="modified residue" description="Phosphoserine" evidence="2">
    <location>
        <position position="231"/>
    </location>
</feature>
<feature type="sequence conflict" description="In Ref. 3; BAD94388." evidence="5" ref="3">
    <original>T</original>
    <variation>A</variation>
    <location>
        <position position="205"/>
    </location>
</feature>
<sequence>MAAVDSTDRRDFIVNINGQESGAVGATGSSSNAEGGNIWKESSYDFWDGEKGKNDKKGDDEDEDGGSFHFRQRGERRHSSAELSDPPSKLIGQFLHKQRASGDEISLDVELNMAELQSNTPPRPATASNTPRRGLTTISESSSPVKTKVKADAVRRRQNRTSLGGSSDEEGRNRDEAEVLKCGSKKPMLSRNKTKSRLQDPPTPTHPAIDKTEMKSGRRSGIFKSGFLGKSPKAGTPGRNGFEEEEEEDPFLDEDLPEEFKRDKLSFWVFLEWISLVLIVTSLVCSLTIHNLQRKTWWKLDLWKWEVTVLVLICGRLVSSWIVRIIVFLVEKNFTWRKRVLYFVYGVRKSVQNCLWLGLVLLAWHFLFDKKVERETRSTALRYVTRVLVCLLVALIIWLVKTILVKVLASSFHMSTYFDRIQESLFTQYVIETLSGPPLMEIQRMEEEEQQVAEDVKSLEKLAGAKLPPALKATVKSFMKVGKSPGLNRIGSKRGEDGEGIRIDQLKRMNTKNVSAWNMKRLMNIILKGAISTLDQNMQDTTQEDEDATHIRSEYEAKCAARKIFHNVTEPGSRYIYLEDFLRFLCEEEAERAMALFEGASESDKISKSCLKNWVVKAFRERRALALTLNDTKTAVDRLHRIINVVIGIIIIIIWLLILGIATTRFLLVLSSQLLLVAFVFGNSCKTIFEAIIFLFVMHPFDVGDRCEIDGVQLVVEEMNILTTVFLRYDNQKIIYPNSVLGTKPIANYYRSPDMGDAVEFCVHIATPPEKITAIKQRILSYVDNKKDYWYPAPMIVFLSMDDLNSVKIAVWLTHRMNHQDMGERYIRRGLLLEEVGKTCRELDIEYRLYPLNINVRSLPPTANPTSSDRIPPSWMQQRGP</sequence>
<organism>
    <name type="scientific">Arabidopsis thaliana</name>
    <name type="common">Mouse-ear cress</name>
    <dbReference type="NCBI Taxonomy" id="3702"/>
    <lineage>
        <taxon>Eukaryota</taxon>
        <taxon>Viridiplantae</taxon>
        <taxon>Streptophyta</taxon>
        <taxon>Embryophyta</taxon>
        <taxon>Tracheophyta</taxon>
        <taxon>Spermatophyta</taxon>
        <taxon>Magnoliopsida</taxon>
        <taxon>eudicotyledons</taxon>
        <taxon>Gunneridae</taxon>
        <taxon>Pentapetalae</taxon>
        <taxon>rosids</taxon>
        <taxon>malvids</taxon>
        <taxon>Brassicales</taxon>
        <taxon>Brassicaceae</taxon>
        <taxon>Camelineae</taxon>
        <taxon>Arabidopsis</taxon>
    </lineage>
</organism>
<dbReference type="EMBL" id="AP002061">
    <property type="protein sequence ID" value="BAB02647.1"/>
    <property type="molecule type" value="Genomic_DNA"/>
</dbReference>
<dbReference type="EMBL" id="CP002686">
    <property type="protein sequence ID" value="AEE75568.1"/>
    <property type="molecule type" value="Genomic_DNA"/>
</dbReference>
<dbReference type="EMBL" id="AK221412">
    <property type="protein sequence ID" value="BAD94388.1"/>
    <property type="molecule type" value="mRNA"/>
</dbReference>
<dbReference type="RefSeq" id="NP_188099.2">
    <molecule id="Q9LH74-1"/>
    <property type="nucleotide sequence ID" value="NM_112342.4"/>
</dbReference>
<dbReference type="SMR" id="Q9LH74"/>
<dbReference type="BioGRID" id="6044">
    <property type="interactions" value="1"/>
</dbReference>
<dbReference type="FunCoup" id="Q9LH74">
    <property type="interactions" value="20"/>
</dbReference>
<dbReference type="STRING" id="3702.Q9LH74"/>
<dbReference type="TCDB" id="1.A.23.4.8">
    <property type="family name" value="the small conductance mechanosensitive ion channel (mscs) family"/>
</dbReference>
<dbReference type="iPTMnet" id="Q9LH74"/>
<dbReference type="PaxDb" id="3702-AT3G14810.1"/>
<dbReference type="ProteomicsDB" id="239005">
    <molecule id="Q9LH74-1"/>
</dbReference>
<dbReference type="EnsemblPlants" id="AT3G14810.1">
    <molecule id="Q9LH74-1"/>
    <property type="protein sequence ID" value="AT3G14810.1"/>
    <property type="gene ID" value="AT3G14810"/>
</dbReference>
<dbReference type="GeneID" id="820710"/>
<dbReference type="Gramene" id="AT3G14810.1">
    <molecule id="Q9LH74-1"/>
    <property type="protein sequence ID" value="AT3G14810.1"/>
    <property type="gene ID" value="AT3G14810"/>
</dbReference>
<dbReference type="KEGG" id="ath:AT3G14810"/>
<dbReference type="Araport" id="AT3G14810"/>
<dbReference type="TAIR" id="AT3G14810">
    <property type="gene designation" value="MSL5"/>
</dbReference>
<dbReference type="eggNOG" id="KOG4629">
    <property type="taxonomic scope" value="Eukaryota"/>
</dbReference>
<dbReference type="HOGENOM" id="CLU_013552_0_0_1"/>
<dbReference type="InParanoid" id="Q9LH74"/>
<dbReference type="OMA" id="GSRYIHM"/>
<dbReference type="OrthoDB" id="544685at2759"/>
<dbReference type="PhylomeDB" id="Q9LH74"/>
<dbReference type="PRO" id="PR:Q9LH74"/>
<dbReference type="Proteomes" id="UP000006548">
    <property type="component" value="Chromosome 3"/>
</dbReference>
<dbReference type="ExpressionAtlas" id="Q9LH74">
    <property type="expression patterns" value="baseline and differential"/>
</dbReference>
<dbReference type="GO" id="GO:0016020">
    <property type="term" value="C:membrane"/>
    <property type="evidence" value="ECO:0007669"/>
    <property type="project" value="UniProtKB-SubCell"/>
</dbReference>
<dbReference type="GO" id="GO:0034220">
    <property type="term" value="P:monoatomic ion transmembrane transport"/>
    <property type="evidence" value="ECO:0007669"/>
    <property type="project" value="UniProtKB-KW"/>
</dbReference>
<dbReference type="FunFam" id="2.30.30.60:FF:000003">
    <property type="entry name" value="Predicted mechanosensitive ion channel"/>
    <property type="match status" value="1"/>
</dbReference>
<dbReference type="Gene3D" id="2.30.30.60">
    <property type="match status" value="1"/>
</dbReference>
<dbReference type="InterPro" id="IPR010920">
    <property type="entry name" value="LSM_dom_sf"/>
</dbReference>
<dbReference type="InterPro" id="IPR016688">
    <property type="entry name" value="MscS-like_plants/fungi"/>
</dbReference>
<dbReference type="InterPro" id="IPR023408">
    <property type="entry name" value="MscS_beta-dom_sf"/>
</dbReference>
<dbReference type="InterPro" id="IPR006685">
    <property type="entry name" value="MscS_channel_2nd"/>
</dbReference>
<dbReference type="PANTHER" id="PTHR31618">
    <property type="entry name" value="MECHANOSENSITIVE ION CHANNEL PROTEIN 5"/>
    <property type="match status" value="1"/>
</dbReference>
<dbReference type="PANTHER" id="PTHR31618:SF32">
    <property type="entry name" value="MECHANOSENSITIVE ION CHANNEL PROTEIN 5"/>
    <property type="match status" value="1"/>
</dbReference>
<dbReference type="Pfam" id="PF00924">
    <property type="entry name" value="MS_channel_2nd"/>
    <property type="match status" value="1"/>
</dbReference>
<dbReference type="PIRSF" id="PIRSF017209">
    <property type="entry name" value="Memb_At2g17000_prd"/>
    <property type="match status" value="1"/>
</dbReference>
<dbReference type="SUPFAM" id="SSF50182">
    <property type="entry name" value="Sm-like ribonucleoproteins"/>
    <property type="match status" value="1"/>
</dbReference>
<gene>
    <name type="primary">MSL5</name>
    <name type="ordered locus">At3g14810</name>
    <name type="ORF">T21E2.7</name>
</gene>
<accession>Q9LH74</accession>
<accession>Q56YB1</accession>
<comment type="function">
    <text evidence="1">Mechanosensitive channel that opens in response to stretch forces in the membrane lipid bilayer.</text>
</comment>
<comment type="subcellular location">
    <subcellularLocation>
        <location evidence="5">Membrane</location>
        <topology evidence="5">Multi-pass membrane protein</topology>
    </subcellularLocation>
</comment>
<comment type="alternative products">
    <event type="alternative splicing"/>
    <isoform>
        <id>Q9LH74-1</id>
        <name>1</name>
        <sequence type="displayed"/>
    </isoform>
    <text>A number of isoforms are produced. According to EST sequences.</text>
</comment>
<comment type="similarity">
    <text evidence="5">Belongs to the MscS (TC 1.A.23) family.</text>
</comment>
<proteinExistence type="evidence at transcript level"/>
<reference key="1">
    <citation type="journal article" date="2000" name="DNA Res.">
        <title>Structural analysis of Arabidopsis thaliana chromosome 3. II. Sequence features of the 4,251,695 bp regions covered by 90 P1, TAC and BAC clones.</title>
        <authorList>
            <person name="Kaneko T."/>
            <person name="Katoh T."/>
            <person name="Sato S."/>
            <person name="Nakamura Y."/>
            <person name="Asamizu E."/>
            <person name="Tabata S."/>
        </authorList>
    </citation>
    <scope>NUCLEOTIDE SEQUENCE [LARGE SCALE GENOMIC DNA]</scope>
    <source>
        <strain>cv. Columbia</strain>
    </source>
</reference>
<reference key="2">
    <citation type="journal article" date="2017" name="Plant J.">
        <title>Araport11: a complete reannotation of the Arabidopsis thaliana reference genome.</title>
        <authorList>
            <person name="Cheng C.Y."/>
            <person name="Krishnakumar V."/>
            <person name="Chan A.P."/>
            <person name="Thibaud-Nissen F."/>
            <person name="Schobel S."/>
            <person name="Town C.D."/>
        </authorList>
    </citation>
    <scope>GENOME REANNOTATION</scope>
    <source>
        <strain>cv. Columbia</strain>
    </source>
</reference>
<reference key="3">
    <citation type="submission" date="2005-03" db="EMBL/GenBank/DDBJ databases">
        <title>Large-scale analysis of RIKEN Arabidopsis full-length (RAFL) cDNAs.</title>
        <authorList>
            <person name="Totoki Y."/>
            <person name="Seki M."/>
            <person name="Ishida J."/>
            <person name="Nakajima M."/>
            <person name="Enju A."/>
            <person name="Kamiya A."/>
            <person name="Narusaka M."/>
            <person name="Shin-i T."/>
            <person name="Nakagawa M."/>
            <person name="Sakamoto N."/>
            <person name="Oishi K."/>
            <person name="Kohara Y."/>
            <person name="Kobayashi M."/>
            <person name="Toyoda A."/>
            <person name="Sakaki Y."/>
            <person name="Sakurai T."/>
            <person name="Iida K."/>
            <person name="Akiyama K."/>
            <person name="Satou M."/>
            <person name="Toyoda T."/>
            <person name="Konagaya A."/>
            <person name="Carninci P."/>
            <person name="Kawai J."/>
            <person name="Hayashizaki Y."/>
            <person name="Shinozaki K."/>
        </authorList>
    </citation>
    <scope>NUCLEOTIDE SEQUENCE [LARGE SCALE MRNA] OF 1-318</scope>
    <source>
        <strain>cv. Columbia</strain>
    </source>
</reference>
<reference key="4">
    <citation type="journal article" date="2003" name="Microbiol. Mol. Biol. Rev.">
        <title>Two families of mechanosensitive channel proteins.</title>
        <authorList>
            <person name="Pivetti C.D."/>
            <person name="Yen M.R."/>
            <person name="Miller S."/>
            <person name="Busch W."/>
            <person name="Tseng Y.H."/>
            <person name="Booth I.R."/>
            <person name="Saier M.H. Jr."/>
        </authorList>
    </citation>
    <scope>GENE FAMILY</scope>
</reference>
<reference key="5">
    <citation type="book" date="2007" name="Mechanosensitive Ion Channels, Part A">
        <title>MscS-like proteins in plants.</title>
        <editorList>
            <person name="Hamill O.P."/>
        </editorList>
        <authorList>
            <person name="Haswell E.S."/>
        </authorList>
    </citation>
    <scope>REVIEW</scope>
    <scope>GENE FAMILY</scope>
    <scope>NOMENCLATURE</scope>
</reference>
<protein>
    <recommendedName>
        <fullName>Mechanosensitive ion channel protein 5</fullName>
    </recommendedName>
    <alternativeName>
        <fullName>Mechanosensitive channel of small conductance-like 5</fullName>
    </alternativeName>
    <alternativeName>
        <fullName>MscS-Like protein 5</fullName>
    </alternativeName>
</protein>
<evidence type="ECO:0000250" key="1"/>
<evidence type="ECO:0000250" key="2">
    <source>
        <dbReference type="UniProtKB" id="Q9LYG9"/>
    </source>
</evidence>
<evidence type="ECO:0000255" key="3"/>
<evidence type="ECO:0000256" key="4">
    <source>
        <dbReference type="SAM" id="MobiDB-lite"/>
    </source>
</evidence>
<evidence type="ECO:0000305" key="5"/>